<proteinExistence type="inferred from homology"/>
<accession>O74559</accession>
<feature type="chain" id="PRO_0000127670" description="Surfeit locus protein 4 homolog">
    <location>
        <begin position="1"/>
        <end position="302"/>
    </location>
</feature>
<feature type="transmembrane region" description="Helical" evidence="3">
    <location>
        <begin position="95"/>
        <end position="115"/>
    </location>
</feature>
<feature type="transmembrane region" description="Helical" evidence="3">
    <location>
        <begin position="120"/>
        <end position="140"/>
    </location>
</feature>
<feature type="transmembrane region" description="Helical" evidence="3">
    <location>
        <begin position="193"/>
        <end position="213"/>
    </location>
</feature>
<feature type="transmembrane region" description="Helical" evidence="3">
    <location>
        <begin position="215"/>
        <end position="235"/>
    </location>
</feature>
<feature type="transmembrane region" description="Helical" evidence="3">
    <location>
        <begin position="236"/>
        <end position="256"/>
    </location>
</feature>
<feature type="transmembrane region" description="Helical" evidence="3">
    <location>
        <begin position="271"/>
        <end position="291"/>
    </location>
</feature>
<feature type="short sequence motif" description="Di-lysine motif" evidence="3">
    <location>
        <begin position="299"/>
        <end position="302"/>
    </location>
</feature>
<protein>
    <recommendedName>
        <fullName>Surfeit locus protein 4 homolog</fullName>
    </recommendedName>
</protein>
<reference key="1">
    <citation type="journal article" date="2002" name="Nature">
        <title>The genome sequence of Schizosaccharomyces pombe.</title>
        <authorList>
            <person name="Wood V."/>
            <person name="Gwilliam R."/>
            <person name="Rajandream M.A."/>
            <person name="Lyne M.H."/>
            <person name="Lyne R."/>
            <person name="Stewart A."/>
            <person name="Sgouros J.G."/>
            <person name="Peat N."/>
            <person name="Hayles J."/>
            <person name="Baker S.G."/>
            <person name="Basham D."/>
            <person name="Bowman S."/>
            <person name="Brooks K."/>
            <person name="Brown D."/>
            <person name="Brown S."/>
            <person name="Chillingworth T."/>
            <person name="Churcher C.M."/>
            <person name="Collins M."/>
            <person name="Connor R."/>
            <person name="Cronin A."/>
            <person name="Davis P."/>
            <person name="Feltwell T."/>
            <person name="Fraser A."/>
            <person name="Gentles S."/>
            <person name="Goble A."/>
            <person name="Hamlin N."/>
            <person name="Harris D.E."/>
            <person name="Hidalgo J."/>
            <person name="Hodgson G."/>
            <person name="Holroyd S."/>
            <person name="Hornsby T."/>
            <person name="Howarth S."/>
            <person name="Huckle E.J."/>
            <person name="Hunt S."/>
            <person name="Jagels K."/>
            <person name="James K.D."/>
            <person name="Jones L."/>
            <person name="Jones M."/>
            <person name="Leather S."/>
            <person name="McDonald S."/>
            <person name="McLean J."/>
            <person name="Mooney P."/>
            <person name="Moule S."/>
            <person name="Mungall K.L."/>
            <person name="Murphy L.D."/>
            <person name="Niblett D."/>
            <person name="Odell C."/>
            <person name="Oliver K."/>
            <person name="O'Neil S."/>
            <person name="Pearson D."/>
            <person name="Quail M.A."/>
            <person name="Rabbinowitsch E."/>
            <person name="Rutherford K.M."/>
            <person name="Rutter S."/>
            <person name="Saunders D."/>
            <person name="Seeger K."/>
            <person name="Sharp S."/>
            <person name="Skelton J."/>
            <person name="Simmonds M.N."/>
            <person name="Squares R."/>
            <person name="Squares S."/>
            <person name="Stevens K."/>
            <person name="Taylor K."/>
            <person name="Taylor R.G."/>
            <person name="Tivey A."/>
            <person name="Walsh S.V."/>
            <person name="Warren T."/>
            <person name="Whitehead S."/>
            <person name="Woodward J.R."/>
            <person name="Volckaert G."/>
            <person name="Aert R."/>
            <person name="Robben J."/>
            <person name="Grymonprez B."/>
            <person name="Weltjens I."/>
            <person name="Vanstreels E."/>
            <person name="Rieger M."/>
            <person name="Schaefer M."/>
            <person name="Mueller-Auer S."/>
            <person name="Gabel C."/>
            <person name="Fuchs M."/>
            <person name="Duesterhoeft A."/>
            <person name="Fritzc C."/>
            <person name="Holzer E."/>
            <person name="Moestl D."/>
            <person name="Hilbert H."/>
            <person name="Borzym K."/>
            <person name="Langer I."/>
            <person name="Beck A."/>
            <person name="Lehrach H."/>
            <person name="Reinhardt R."/>
            <person name="Pohl T.M."/>
            <person name="Eger P."/>
            <person name="Zimmermann W."/>
            <person name="Wedler H."/>
            <person name="Wambutt R."/>
            <person name="Purnelle B."/>
            <person name="Goffeau A."/>
            <person name="Cadieu E."/>
            <person name="Dreano S."/>
            <person name="Gloux S."/>
            <person name="Lelaure V."/>
            <person name="Mottier S."/>
            <person name="Galibert F."/>
            <person name="Aves S.J."/>
            <person name="Xiang Z."/>
            <person name="Hunt C."/>
            <person name="Moore K."/>
            <person name="Hurst S.M."/>
            <person name="Lucas M."/>
            <person name="Rochet M."/>
            <person name="Gaillardin C."/>
            <person name="Tallada V.A."/>
            <person name="Garzon A."/>
            <person name="Thode G."/>
            <person name="Daga R.R."/>
            <person name="Cruzado L."/>
            <person name="Jimenez J."/>
            <person name="Sanchez M."/>
            <person name="del Rey F."/>
            <person name="Benito J."/>
            <person name="Dominguez A."/>
            <person name="Revuelta J.L."/>
            <person name="Moreno S."/>
            <person name="Armstrong J."/>
            <person name="Forsburg S.L."/>
            <person name="Cerutti L."/>
            <person name="Lowe T."/>
            <person name="McCombie W.R."/>
            <person name="Paulsen I."/>
            <person name="Potashkin J."/>
            <person name="Shpakovski G.V."/>
            <person name="Ussery D."/>
            <person name="Barrell B.G."/>
            <person name="Nurse P."/>
        </authorList>
    </citation>
    <scope>NUCLEOTIDE SEQUENCE [LARGE SCALE GENOMIC DNA]</scope>
    <source>
        <strain>972 / ATCC 24843</strain>
    </source>
</reference>
<evidence type="ECO:0000250" key="1">
    <source>
        <dbReference type="UniProtKB" id="O15260"/>
    </source>
</evidence>
<evidence type="ECO:0000250" key="2">
    <source>
        <dbReference type="UniProtKB" id="P53337"/>
    </source>
</evidence>
<evidence type="ECO:0000255" key="3"/>
<evidence type="ECO:0000305" key="4"/>
<sequence>MTSRSPFSTIPLSMNQDSYQTRTTVGIRKKTFSERACQFMEQAETFMAPFTPYMPLLGRFLIVATYFEDAIRIVTQWPEQVSYMRDYRRFRFGTAPLLLFVCVVLMLVGSTLVVFKKRQAYAIGSLLFVTLLQAFAYGLITSGEMFFRNMSVIGGLCLVASDTFIHRRINRFAGLPAVSEHNKRTYFQLAGRVLLIFMFLGLLAKEGSGISWTRILVHILSVTACAMVVIGFKAKFFAAVLVLILSVANFIINSFWSVPRESPYRDFYRYDFFQTLSIVGGLLYLVNTGPGKFSVDEKKKIY</sequence>
<name>SURF4_SCHPO</name>
<organism>
    <name type="scientific">Schizosaccharomyces pombe (strain 972 / ATCC 24843)</name>
    <name type="common">Fission yeast</name>
    <dbReference type="NCBI Taxonomy" id="284812"/>
    <lineage>
        <taxon>Eukaryota</taxon>
        <taxon>Fungi</taxon>
        <taxon>Dikarya</taxon>
        <taxon>Ascomycota</taxon>
        <taxon>Taphrinomycotina</taxon>
        <taxon>Schizosaccharomycetes</taxon>
        <taxon>Schizosaccharomycetales</taxon>
        <taxon>Schizosaccharomycetaceae</taxon>
        <taxon>Schizosaccharomyces</taxon>
    </lineage>
</organism>
<comment type="subcellular location">
    <subcellularLocation>
        <location evidence="2">Endoplasmic reticulum membrane</location>
        <topology evidence="3">Multi-pass membrane protein</topology>
    </subcellularLocation>
</comment>
<comment type="domain">
    <text evidence="1">The di-lysine motif confers endoplasmic reticulum localization for type I membrane proteins.</text>
</comment>
<comment type="similarity">
    <text evidence="4">Belongs to the SURF4 family.</text>
</comment>
<dbReference type="EMBL" id="CU329672">
    <property type="protein sequence ID" value="CAA20699.1"/>
    <property type="molecule type" value="Genomic_DNA"/>
</dbReference>
<dbReference type="PIR" id="T41674">
    <property type="entry name" value="T41674"/>
</dbReference>
<dbReference type="SMR" id="O74559"/>
<dbReference type="BioGRID" id="276078">
    <property type="interactions" value="5"/>
</dbReference>
<dbReference type="FunCoup" id="O74559">
    <property type="interactions" value="367"/>
</dbReference>
<dbReference type="STRING" id="284812.O74559"/>
<dbReference type="iPTMnet" id="O74559"/>
<dbReference type="PaxDb" id="4896-SPCC970.06.1"/>
<dbReference type="EnsemblFungi" id="SPCC970.06.1">
    <property type="protein sequence ID" value="SPCC970.06.1:pep"/>
    <property type="gene ID" value="SPCC970.06"/>
</dbReference>
<dbReference type="KEGG" id="spo:2539516"/>
<dbReference type="PomBase" id="SPCC970.06"/>
<dbReference type="VEuPathDB" id="FungiDB:SPCC970.06"/>
<dbReference type="eggNOG" id="KOG3998">
    <property type="taxonomic scope" value="Eukaryota"/>
</dbReference>
<dbReference type="HOGENOM" id="CLU_056195_0_0_1"/>
<dbReference type="InParanoid" id="O74559"/>
<dbReference type="OMA" id="RHRHFPW"/>
<dbReference type="PhylomeDB" id="O74559"/>
<dbReference type="Reactome" id="R-SPO-6798695">
    <property type="pathway name" value="Neutrophil degranulation"/>
</dbReference>
<dbReference type="Reactome" id="R-SPO-6811434">
    <property type="pathway name" value="COPI-dependent Golgi-to-ER retrograde traffic"/>
</dbReference>
<dbReference type="PRO" id="PR:O74559"/>
<dbReference type="Proteomes" id="UP000002485">
    <property type="component" value="Chromosome III"/>
</dbReference>
<dbReference type="GO" id="GO:0030134">
    <property type="term" value="C:COPII-coated ER to Golgi transport vesicle"/>
    <property type="evidence" value="ECO:0000266"/>
    <property type="project" value="PomBase"/>
</dbReference>
<dbReference type="GO" id="GO:0005783">
    <property type="term" value="C:endoplasmic reticulum"/>
    <property type="evidence" value="ECO:0007005"/>
    <property type="project" value="PomBase"/>
</dbReference>
<dbReference type="GO" id="GO:0005789">
    <property type="term" value="C:endoplasmic reticulum membrane"/>
    <property type="evidence" value="ECO:0000305"/>
    <property type="project" value="PomBase"/>
</dbReference>
<dbReference type="GO" id="GO:0005793">
    <property type="term" value="C:endoplasmic reticulum-Golgi intermediate compartment"/>
    <property type="evidence" value="ECO:0000318"/>
    <property type="project" value="GO_Central"/>
</dbReference>
<dbReference type="GO" id="GO:0005794">
    <property type="term" value="C:Golgi apparatus"/>
    <property type="evidence" value="ECO:0007005"/>
    <property type="project" value="PomBase"/>
</dbReference>
<dbReference type="GO" id="GO:0097020">
    <property type="term" value="F:COPII receptor activity"/>
    <property type="evidence" value="ECO:0000266"/>
    <property type="project" value="PomBase"/>
</dbReference>
<dbReference type="GO" id="GO:0006888">
    <property type="term" value="P:endoplasmic reticulum to Golgi vesicle-mediated transport"/>
    <property type="evidence" value="ECO:0000266"/>
    <property type="project" value="PomBase"/>
</dbReference>
<dbReference type="GO" id="GO:0007030">
    <property type="term" value="P:Golgi organization"/>
    <property type="evidence" value="ECO:0000318"/>
    <property type="project" value="GO_Central"/>
</dbReference>
<dbReference type="InterPro" id="IPR002995">
    <property type="entry name" value="Surf4"/>
</dbReference>
<dbReference type="Pfam" id="PF02077">
    <property type="entry name" value="SURF4"/>
    <property type="match status" value="1"/>
</dbReference>
<dbReference type="PROSITE" id="PS01339">
    <property type="entry name" value="SURF4"/>
    <property type="match status" value="1"/>
</dbReference>
<keyword id="KW-0256">Endoplasmic reticulum</keyword>
<keyword id="KW-0472">Membrane</keyword>
<keyword id="KW-1185">Reference proteome</keyword>
<keyword id="KW-0812">Transmembrane</keyword>
<keyword id="KW-1133">Transmembrane helix</keyword>
<gene>
    <name type="ORF">SPCC970.06</name>
</gene>